<feature type="transit peptide" description="Mitochondrion" evidence="1">
    <location>
        <begin position="1"/>
        <end position="59"/>
    </location>
</feature>
<feature type="chain" id="PRO_0000034152" description="Thioredoxin, mitochondrial">
    <location>
        <begin position="60"/>
        <end position="166"/>
    </location>
</feature>
<feature type="domain" description="Thioredoxin" evidence="5">
    <location>
        <begin position="61"/>
        <end position="166"/>
    </location>
</feature>
<feature type="active site" description="Nucleophile" evidence="2">
    <location>
        <position position="90"/>
    </location>
</feature>
<feature type="active site" description="Nucleophile" evidence="2">
    <location>
        <position position="93"/>
    </location>
</feature>
<feature type="site" description="Deprotonates C-terminal active site Cys" evidence="2">
    <location>
        <position position="84"/>
    </location>
</feature>
<feature type="site" description="Contributes to redox potential value" evidence="2">
    <location>
        <position position="91"/>
    </location>
</feature>
<feature type="site" description="Contributes to redox potential value" evidence="2">
    <location>
        <position position="92"/>
    </location>
</feature>
<feature type="modified residue" description="N6-acetyllysine; alternate" evidence="4">
    <location>
        <position position="152"/>
    </location>
</feature>
<feature type="modified residue" description="N6-succinyllysine; alternate" evidence="3">
    <location>
        <position position="152"/>
    </location>
</feature>
<feature type="disulfide bond" description="Redox-active" evidence="5">
    <location>
        <begin position="90"/>
        <end position="93"/>
    </location>
</feature>
<name>THIOM_RAT</name>
<dbReference type="EMBL" id="U73525">
    <property type="protein sequence ID" value="AAC53008.1"/>
    <property type="molecule type" value="mRNA"/>
</dbReference>
<dbReference type="EMBL" id="BC081760">
    <property type="protein sequence ID" value="AAH81760.1"/>
    <property type="molecule type" value="mRNA"/>
</dbReference>
<dbReference type="RefSeq" id="NP_445783.1">
    <property type="nucleotide sequence ID" value="NM_053331.2"/>
</dbReference>
<dbReference type="SMR" id="P97615"/>
<dbReference type="CORUM" id="P97615"/>
<dbReference type="FunCoup" id="P97615">
    <property type="interactions" value="1875"/>
</dbReference>
<dbReference type="STRING" id="10116.ENSRNOP00000060694"/>
<dbReference type="iPTMnet" id="P97615"/>
<dbReference type="PhosphoSitePlus" id="P97615"/>
<dbReference type="jPOST" id="P97615"/>
<dbReference type="PaxDb" id="10116-ENSRNOP00000060694"/>
<dbReference type="Ensembl" id="ENSRNOT00000067483.4">
    <property type="protein sequence ID" value="ENSRNOP00000060694.1"/>
    <property type="gene ID" value="ENSRNOG00000005614.8"/>
</dbReference>
<dbReference type="GeneID" id="79462"/>
<dbReference type="KEGG" id="rno:79462"/>
<dbReference type="UCSC" id="RGD:71040">
    <property type="organism name" value="rat"/>
</dbReference>
<dbReference type="AGR" id="RGD:71040"/>
<dbReference type="CTD" id="25828"/>
<dbReference type="RGD" id="71040">
    <property type="gene designation" value="Txn2"/>
</dbReference>
<dbReference type="eggNOG" id="KOG0910">
    <property type="taxonomic scope" value="Eukaryota"/>
</dbReference>
<dbReference type="GeneTree" id="ENSGT00530000064086"/>
<dbReference type="InParanoid" id="P97615"/>
<dbReference type="OMA" id="VLVIMQN"/>
<dbReference type="OrthoDB" id="19690at2759"/>
<dbReference type="PhylomeDB" id="P97615"/>
<dbReference type="TreeFam" id="TF314517"/>
<dbReference type="Reactome" id="R-RNO-1614558">
    <property type="pathway name" value="Degradation of cysteine and homocysteine"/>
</dbReference>
<dbReference type="Reactome" id="R-RNO-3299685">
    <property type="pathway name" value="Detoxification of Reactive Oxygen Species"/>
</dbReference>
<dbReference type="PRO" id="PR:P97615"/>
<dbReference type="Proteomes" id="UP000002494">
    <property type="component" value="Chromosome 7"/>
</dbReference>
<dbReference type="Bgee" id="ENSRNOG00000005614">
    <property type="expression patterns" value="Expressed in skeletal muscle tissue and 20 other cell types or tissues"/>
</dbReference>
<dbReference type="GO" id="GO:0030425">
    <property type="term" value="C:dendrite"/>
    <property type="evidence" value="ECO:0000314"/>
    <property type="project" value="RGD"/>
</dbReference>
<dbReference type="GO" id="GO:0005739">
    <property type="term" value="C:mitochondrion"/>
    <property type="evidence" value="ECO:0000266"/>
    <property type="project" value="RGD"/>
</dbReference>
<dbReference type="GO" id="GO:0043025">
    <property type="term" value="C:neuronal cell body"/>
    <property type="evidence" value="ECO:0000314"/>
    <property type="project" value="RGD"/>
</dbReference>
<dbReference type="GO" id="GO:0044877">
    <property type="term" value="F:protein-containing complex binding"/>
    <property type="evidence" value="ECO:0000353"/>
    <property type="project" value="RGD"/>
</dbReference>
<dbReference type="GO" id="GO:0015035">
    <property type="term" value="F:protein-disulfide reductase activity"/>
    <property type="evidence" value="ECO:0007669"/>
    <property type="project" value="InterPro"/>
</dbReference>
<dbReference type="GO" id="GO:0045454">
    <property type="term" value="P:cell redox homeostasis"/>
    <property type="evidence" value="ECO:0000318"/>
    <property type="project" value="GO_Central"/>
</dbReference>
<dbReference type="GO" id="GO:0031669">
    <property type="term" value="P:cellular response to nutrient levels"/>
    <property type="evidence" value="ECO:0000270"/>
    <property type="project" value="RGD"/>
</dbReference>
<dbReference type="GO" id="GO:0048678">
    <property type="term" value="P:response to axon injury"/>
    <property type="evidence" value="ECO:0000270"/>
    <property type="project" value="RGD"/>
</dbReference>
<dbReference type="GO" id="GO:0009749">
    <property type="term" value="P:response to glucose"/>
    <property type="evidence" value="ECO:0000270"/>
    <property type="project" value="RGD"/>
</dbReference>
<dbReference type="GO" id="GO:0009725">
    <property type="term" value="P:response to hormone"/>
    <property type="evidence" value="ECO:0000270"/>
    <property type="project" value="RGD"/>
</dbReference>
<dbReference type="GO" id="GO:0001666">
    <property type="term" value="P:response to hypoxia"/>
    <property type="evidence" value="ECO:0000270"/>
    <property type="project" value="RGD"/>
</dbReference>
<dbReference type="GO" id="GO:0006979">
    <property type="term" value="P:response to oxidative stress"/>
    <property type="evidence" value="ECO:0000270"/>
    <property type="project" value="RGD"/>
</dbReference>
<dbReference type="GO" id="GO:0009410">
    <property type="term" value="P:response to xenobiotic stimulus"/>
    <property type="evidence" value="ECO:0000270"/>
    <property type="project" value="RGD"/>
</dbReference>
<dbReference type="CDD" id="cd02947">
    <property type="entry name" value="TRX_family"/>
    <property type="match status" value="1"/>
</dbReference>
<dbReference type="FunFam" id="3.40.30.10:FF:000001">
    <property type="entry name" value="Thioredoxin"/>
    <property type="match status" value="1"/>
</dbReference>
<dbReference type="Gene3D" id="3.40.30.10">
    <property type="entry name" value="Glutaredoxin"/>
    <property type="match status" value="1"/>
</dbReference>
<dbReference type="InterPro" id="IPR005746">
    <property type="entry name" value="Thioredoxin"/>
</dbReference>
<dbReference type="InterPro" id="IPR036249">
    <property type="entry name" value="Thioredoxin-like_sf"/>
</dbReference>
<dbReference type="InterPro" id="IPR017937">
    <property type="entry name" value="Thioredoxin_CS"/>
</dbReference>
<dbReference type="InterPro" id="IPR013766">
    <property type="entry name" value="Thioredoxin_domain"/>
</dbReference>
<dbReference type="NCBIfam" id="TIGR01068">
    <property type="entry name" value="thioredoxin"/>
    <property type="match status" value="1"/>
</dbReference>
<dbReference type="PANTHER" id="PTHR43601">
    <property type="entry name" value="THIOREDOXIN, MITOCHONDRIAL"/>
    <property type="match status" value="1"/>
</dbReference>
<dbReference type="PANTHER" id="PTHR43601:SF3">
    <property type="entry name" value="THIOREDOXIN, MITOCHONDRIAL"/>
    <property type="match status" value="1"/>
</dbReference>
<dbReference type="Pfam" id="PF00085">
    <property type="entry name" value="Thioredoxin"/>
    <property type="match status" value="1"/>
</dbReference>
<dbReference type="PRINTS" id="PR00421">
    <property type="entry name" value="THIOREDOXIN"/>
</dbReference>
<dbReference type="SUPFAM" id="SSF52833">
    <property type="entry name" value="Thioredoxin-like"/>
    <property type="match status" value="1"/>
</dbReference>
<dbReference type="PROSITE" id="PS00194">
    <property type="entry name" value="THIOREDOXIN_1"/>
    <property type="match status" value="1"/>
</dbReference>
<dbReference type="PROSITE" id="PS51352">
    <property type="entry name" value="THIOREDOXIN_2"/>
    <property type="match status" value="1"/>
</dbReference>
<organism>
    <name type="scientific">Rattus norvegicus</name>
    <name type="common">Rat</name>
    <dbReference type="NCBI Taxonomy" id="10116"/>
    <lineage>
        <taxon>Eukaryota</taxon>
        <taxon>Metazoa</taxon>
        <taxon>Chordata</taxon>
        <taxon>Craniata</taxon>
        <taxon>Vertebrata</taxon>
        <taxon>Euteleostomi</taxon>
        <taxon>Mammalia</taxon>
        <taxon>Eutheria</taxon>
        <taxon>Euarchontoglires</taxon>
        <taxon>Glires</taxon>
        <taxon>Rodentia</taxon>
        <taxon>Myomorpha</taxon>
        <taxon>Muroidea</taxon>
        <taxon>Muridae</taxon>
        <taxon>Murinae</taxon>
        <taxon>Rattus</taxon>
    </lineage>
</organism>
<protein>
    <recommendedName>
        <fullName>Thioredoxin, mitochondrial</fullName>
        <shortName>MTRX</shortName>
        <shortName>Mt-Trx</shortName>
    </recommendedName>
    <alternativeName>
        <fullName>Thioredoxin-2</fullName>
    </alternativeName>
</protein>
<gene>
    <name type="primary">Txn2</name>
    <name type="synonym">Trx2</name>
</gene>
<accession>P97615</accession>
<sequence length="166" mass="18232">MAQRLLLRRFLTSVISRKPPQGVWASLTSTSLQTPPYNAGGLTGTPSPARTFHTTRVCSTTFNVQDGPDFQDRVVNSETPVVVDFHAQWCGPCKILGPRLEKMVAKQHGKVVMAKVDIDDHTDLAIEYEVSAVPTVLAIKNGDVVDKFVGIKDEDQLEAFLKKLIG</sequence>
<evidence type="ECO:0000250" key="1"/>
<evidence type="ECO:0000250" key="2">
    <source>
        <dbReference type="UniProtKB" id="P10599"/>
    </source>
</evidence>
<evidence type="ECO:0000250" key="3">
    <source>
        <dbReference type="UniProtKB" id="P97493"/>
    </source>
</evidence>
<evidence type="ECO:0000250" key="4">
    <source>
        <dbReference type="UniProtKB" id="Q99757"/>
    </source>
</evidence>
<evidence type="ECO:0000255" key="5">
    <source>
        <dbReference type="PROSITE-ProRule" id="PRU00691"/>
    </source>
</evidence>
<evidence type="ECO:0000269" key="6">
    <source>
    </source>
</evidence>
<evidence type="ECO:0000305" key="7"/>
<keyword id="KW-0007">Acetylation</keyword>
<keyword id="KW-1015">Disulfide bond</keyword>
<keyword id="KW-0249">Electron transport</keyword>
<keyword id="KW-0496">Mitochondrion</keyword>
<keyword id="KW-0676">Redox-active center</keyword>
<keyword id="KW-1185">Reference proteome</keyword>
<keyword id="KW-0809">Transit peptide</keyword>
<keyword id="KW-0813">Transport</keyword>
<comment type="function">
    <text evidence="4 6">Important for the control of mitochondrial reactive oxygen species homeostasis, apoptosis regulation and cell viability (By similarity). Is involved in various redox reactions including the reduction of protein disulfide bonds, through the reversible oxidation of its active center dithiol to a disulfide (PubMed:9006939).</text>
</comment>
<comment type="subunit">
    <text evidence="4">Monomer.</text>
</comment>
<comment type="subcellular location">
    <subcellularLocation>
        <location evidence="6">Mitochondrion</location>
    </subcellularLocation>
</comment>
<comment type="tissue specificity">
    <text evidence="6">Expressed in several tissues with the highest expression levels in heart, muscle, kidney and adrenal gland.</text>
</comment>
<comment type="similarity">
    <text evidence="7">Belongs to the thioredoxin family.</text>
</comment>
<reference key="1">
    <citation type="journal article" date="1997" name="J. Biol. Chem.">
        <title>Cloning and expression of a novel mammalian thioredoxin.</title>
        <authorList>
            <person name="Spyrou G."/>
            <person name="Enmark E."/>
            <person name="Miranda-Vizuete A."/>
            <person name="Gustafsson J.-A."/>
        </authorList>
    </citation>
    <scope>NUCLEOTIDE SEQUENCE [MRNA]</scope>
    <scope>FUNCTION</scope>
    <scope>SUBCELLULAR LOCATION</scope>
    <scope>TISSUE SPECIFICITY</scope>
    <source>
        <strain>Sprague-Dawley</strain>
        <tissue>Heart</tissue>
    </source>
</reference>
<reference key="2">
    <citation type="journal article" date="2004" name="Genome Res.">
        <title>The status, quality, and expansion of the NIH full-length cDNA project: the Mammalian Gene Collection (MGC).</title>
        <authorList>
            <consortium name="The MGC Project Team"/>
        </authorList>
    </citation>
    <scope>NUCLEOTIDE SEQUENCE [LARGE SCALE MRNA]</scope>
    <source>
        <tissue>Heart</tissue>
    </source>
</reference>
<proteinExistence type="evidence at transcript level"/>